<comment type="subcellular location">
    <subcellularLocation>
        <location evidence="2">Membrane</location>
        <topology evidence="2">Single-pass membrane protein</topology>
    </subcellularLocation>
</comment>
<comment type="similarity">
    <text evidence="2">Belongs to the band 7/mec-2 family.</text>
</comment>
<name>QMCA_ECOL6</name>
<proteinExistence type="inferred from homology"/>
<accession>P0AA54</accession>
<accession>P77367</accession>
<reference key="1">
    <citation type="journal article" date="2002" name="Proc. Natl. Acad. Sci. U.S.A.">
        <title>Extensive mosaic structure revealed by the complete genome sequence of uropathogenic Escherichia coli.</title>
        <authorList>
            <person name="Welch R.A."/>
            <person name="Burland V."/>
            <person name="Plunkett G. III"/>
            <person name="Redford P."/>
            <person name="Roesch P."/>
            <person name="Rasko D."/>
            <person name="Buckles E.L."/>
            <person name="Liou S.-R."/>
            <person name="Boutin A."/>
            <person name="Hackett J."/>
            <person name="Stroud D."/>
            <person name="Mayhew G.F."/>
            <person name="Rose D.J."/>
            <person name="Zhou S."/>
            <person name="Schwartz D.C."/>
            <person name="Perna N.T."/>
            <person name="Mobley H.L.T."/>
            <person name="Donnenberg M.S."/>
            <person name="Blattner F.R."/>
        </authorList>
    </citation>
    <scope>NUCLEOTIDE SEQUENCE [LARGE SCALE GENOMIC DNA]</scope>
    <source>
        <strain>CFT073 / ATCC 700928 / UPEC</strain>
    </source>
</reference>
<sequence>MLIFIPILIFVALVIVGAGVKIVPQGYQWTVERFGRYTKTLQPGLSLVVPFMDRIGRKINMMEQVLDIPSQEVISKDNANVTIDAVCFIQVIDAPRAAYEVSNLELAIINLTMTNIRTVLGSMELDEMLSQRDSINSRLLRIVDEATNPWGIKVTRIEIRDVRPPAELISSMNAQMKAERTKRAYILEAEGIRQAEILKAEGEKQSQILKAEGERQSAFLQAEARERSAEAEARATKMVSEAIASGDIQAVNYFVAQKYTEALQQIGSSSNSKVVMMPLEASSLMGSIAGIAELVKDSANKRTQP</sequence>
<protein>
    <recommendedName>
        <fullName>Protein QmcA</fullName>
    </recommendedName>
</protein>
<keyword id="KW-0472">Membrane</keyword>
<keyword id="KW-1185">Reference proteome</keyword>
<keyword id="KW-0812">Transmembrane</keyword>
<keyword id="KW-1133">Transmembrane helix</keyword>
<dbReference type="EMBL" id="AE014075">
    <property type="protein sequence ID" value="AAN79088.1"/>
    <property type="molecule type" value="Genomic_DNA"/>
</dbReference>
<dbReference type="RefSeq" id="WP_000904502.1">
    <property type="nucleotide sequence ID" value="NZ_CP051263.1"/>
</dbReference>
<dbReference type="SMR" id="P0AA54"/>
<dbReference type="STRING" id="199310.c0610"/>
<dbReference type="KEGG" id="ecc:c0610"/>
<dbReference type="eggNOG" id="COG0330">
    <property type="taxonomic scope" value="Bacteria"/>
</dbReference>
<dbReference type="HOGENOM" id="CLU_024949_2_2_6"/>
<dbReference type="BioCyc" id="ECOL199310:C0610-MONOMER"/>
<dbReference type="Proteomes" id="UP000001410">
    <property type="component" value="Chromosome"/>
</dbReference>
<dbReference type="GO" id="GO:0016020">
    <property type="term" value="C:membrane"/>
    <property type="evidence" value="ECO:0007669"/>
    <property type="project" value="UniProtKB-SubCell"/>
</dbReference>
<dbReference type="CDD" id="cd08829">
    <property type="entry name" value="SPFH_paraslipin"/>
    <property type="match status" value="1"/>
</dbReference>
<dbReference type="FunFam" id="3.30.479.30:FF:000006">
    <property type="entry name" value="SPFH/Band 7/PHB domain protein"/>
    <property type="match status" value="1"/>
</dbReference>
<dbReference type="Gene3D" id="3.30.479.30">
    <property type="entry name" value="Band 7 domain"/>
    <property type="match status" value="1"/>
</dbReference>
<dbReference type="InterPro" id="IPR050710">
    <property type="entry name" value="Band7/mec-2_domain"/>
</dbReference>
<dbReference type="InterPro" id="IPR001107">
    <property type="entry name" value="Band_7"/>
</dbReference>
<dbReference type="InterPro" id="IPR036013">
    <property type="entry name" value="Band_7/SPFH_dom_sf"/>
</dbReference>
<dbReference type="InterPro" id="IPR018080">
    <property type="entry name" value="Band_7/stomatin-like_CS"/>
</dbReference>
<dbReference type="InterPro" id="IPR001972">
    <property type="entry name" value="Stomatin_HflK_fam"/>
</dbReference>
<dbReference type="PANTHER" id="PTHR43327">
    <property type="entry name" value="STOMATIN-LIKE PROTEIN 2, MITOCHONDRIAL"/>
    <property type="match status" value="1"/>
</dbReference>
<dbReference type="PANTHER" id="PTHR43327:SF10">
    <property type="entry name" value="STOMATIN-LIKE PROTEIN 2, MITOCHONDRIAL"/>
    <property type="match status" value="1"/>
</dbReference>
<dbReference type="Pfam" id="PF01145">
    <property type="entry name" value="Band_7"/>
    <property type="match status" value="1"/>
</dbReference>
<dbReference type="PRINTS" id="PR00721">
    <property type="entry name" value="STOMATIN"/>
</dbReference>
<dbReference type="SMART" id="SM00244">
    <property type="entry name" value="PHB"/>
    <property type="match status" value="1"/>
</dbReference>
<dbReference type="SUPFAM" id="SSF117892">
    <property type="entry name" value="Band 7/SPFH domain"/>
    <property type="match status" value="1"/>
</dbReference>
<dbReference type="PROSITE" id="PS01270">
    <property type="entry name" value="BAND_7"/>
    <property type="match status" value="1"/>
</dbReference>
<gene>
    <name type="primary">qmcA</name>
    <name type="ordered locus">c0610</name>
</gene>
<organism>
    <name type="scientific">Escherichia coli O6:H1 (strain CFT073 / ATCC 700928 / UPEC)</name>
    <dbReference type="NCBI Taxonomy" id="199310"/>
    <lineage>
        <taxon>Bacteria</taxon>
        <taxon>Pseudomonadati</taxon>
        <taxon>Pseudomonadota</taxon>
        <taxon>Gammaproteobacteria</taxon>
        <taxon>Enterobacterales</taxon>
        <taxon>Enterobacteriaceae</taxon>
        <taxon>Escherichia</taxon>
    </lineage>
</organism>
<evidence type="ECO:0000255" key="1"/>
<evidence type="ECO:0000305" key="2"/>
<feature type="chain" id="PRO_0000094057" description="Protein QmcA">
    <location>
        <begin position="1"/>
        <end position="305"/>
    </location>
</feature>
<feature type="transmembrane region" description="Helical" evidence="1">
    <location>
        <begin position="3"/>
        <end position="23"/>
    </location>
</feature>